<sequence length="3184" mass="360346">MDAERGSVAPRDIDTLKKEVQLRVNPLVLKFQDAVSGKVYRLPLTVHNLGRWNQKIRFQEPSKPQFKLLLTSLDKELASGLQMTAMVEYHPNKNEDMSDHIFISVGNKVLDIPLFGLIPVCQLEIVPVVDFGTLVANSKVHCKEITIINRGKAPGKFKAEYQGQLPIVISPSSGIVKAKTSMVIKVDFCADQAQIVNEMARVSLQGCPETFLNIKVRVVEQIIELFHMNSERKLECIRFGSVFFGTSKLEHALLYNNSPESINWVAIMQDDCVGEELGTNIHQRTDIAINNISYLNKIKKIDMTDFMSCVPNEGTLLPYQKIVITFCFSPKLVVDTKKDVGPSHRQDYALFVRFDSVGSKDGFLRDDNSNTMKSNRLQKVELALTGSGLPVILQFDPGKSLTFAPCHMGEHSDILCIVKNQSISLPVMYHFKKTAHFKMDPERGKIDEGCIQNVICSFVPHQIGVFKVKQVIEIIGPVADDNLRSLSMKPFLYIHLNFSSTCKAFTRKVGVKINPGISPLISNPTRHFVAKDSEKKDDLPPVAAMLQSTATKLHDHCLKDESTKNALIAFPNDRATSIRSGDHHEHFRTIFTKIPRYDYTDPDYEYTDLEKLERKAHRDYYTNYINNLRTIRLRKEAQRERKFPVNEVDIGMLPLSGLKSPPLSQSEIEEEIPPSLKASSLKANRLLSTKKIASRESECLQRKITRGLKSKPTTHQEKQECSKVLTPKQIHQVIVGPSVLNFGNICVKSTNTHLLHIVNMLPMYILIQLDVDFEELQKTKQFSYVIPPTSSTYISMVFESSTSGKFWKSFTFKINNIPGGHILVMAAILPVKLELSSNEIVLRPQSFLLKTCFRGTVRLYNHLNCPAQFGWKPVTTLRGIAFTICPAQGTVDPYCSLECEVTWQPGFSSPDKGEFLLQVSGGNTLTLKCIAHVGHTKVTFLEPRILFSNCSQGLTTWRKAILHNIGQNHAYFKVCDQSLLSTINIVPSEGIIPFGGITVLNISCTPSVAEKFDTRAKVAIHHANVIDLRIGGSVEIPDVEILPSTFNFSGTYVGTTEIIPFIIKNRGVTRARVEFNLKEFPLFAMDFKGNAGECKNVEGPYMYAIEVEEGTSAECGITFSPVEVATYDFSFPVLINSFKASDLYCEYLSQQKVLMPRVSPLIPPCFVQATVLRAPLELSSTVFLFKIPLYEFQHNKEVTRIQDLVLHNISKKTVLWSLDIGRIDKYFKSGIFKFTALIGSLKPNEKYTISIHFCPKQTITYLADVAIRLNDNLFDYRILHLIGEIQLPKISFDPSFICFTPVPLDVTTGVDIRILPQNYFSNSTLHFKIPTAKLLDNDEIHPLTVTFPNGRVIKGSNTGLNDEILCHLSFSSSKPVSFFANLFFSDDRNNWFSLPVTATSENCILTIYLYLAVHLDTQRVVLKEEKQGNIKKPRGSFLVPRRDSKSFASQKMKRGSLVPKFNDAEVICGNLFVGMEISRDYFDSDESIAEKLYAKYLEKEEKCQQFFAPEEGSKAFDYFQKVVNAAQTWFSLFGWPEGPHSLSIPETIRRDVQKIQFYSTSSPPKKFSRQSDFSKYNKTIYDVILHLSGKLPPGINAGQSLPVDNVERVMQLHLQHASLLDFITAQGGCISHVLPEFLLEPKDYMKWLEITTATKSTALSTLKGNYSVNIDMDNFEAWSKRAWTDVFLQIYKVTILSRVTPHCTSSMPILHGENKSKISPCFASSNIYSDSERILLSWLNTNYESQRTSIWKNNKSDVPPGRWIVNFDSDLLDGLVFATQLAAYCPFLIETYFINMYTKPKRPEQYLHNCLIIINSLREIGFDLNIQAIDICDPNPVLMLMLCVYLYERLPTYLPKKVVPFSCTLYDVVVGQILLKNPSLKNLVYTATIVGRDANNFCLAQTGNVVTIGPKNHIVLVVKFVSRFLHPAEATLLLISRPKCGIGGSTLAFALKGEIRNFKAIDVIKCKAPCYQWKEVTVNVKNPFPSGGDFHVILVESTTLMYLPAQVTDSSKVSVMPDHMRSSDYAADQSSSHAENGLRTSIKSNFIREFFCSSTTLSLRPKTSSSIDVYYLPFDMHVRYCAIILSNKDIGDLIYIIEGRGLIPLPSNFLPLEPPSPIDYSTSLEEDKEDPILYLNCKPHQILDMDLKIPLTNEAKEKALAFAAQQQMSTLEYERRAISGTLESSTIRAAVALLGLTKIECLLLFNMSKLKKPKSILYTTELSLPAHFNIPRKIYIPQIPEPPDFHMQSLQIKPQIVSGERPFQKPLPSIQAALEGTVSIPLRFAPLGSGRYPCKLLLLSRHDVRVYLLEGIVNEEVPEAELLFKTPAFQPLTQNIPIKNESKKLSKFHVKIEGEWFHGPPILHVGPGETIQYPLTFKPILECEIMGKLTLQNEVDGMAHIVEIDGIGTKPIALDHIIIDCKVGKVTDKSIIVPNYTKSLLTFKVTSDLSIVWGNSFITIEPDDSIPYTLHVCPWKRGTFKGAIMFFVKSRDEEESQEETDTEKDFSSQETPSDQSTIIFEEYSEEKVKALKIWYHLEIRSSPGPPVDIIELHCIALETTCIEIPISNSKNQPVCLDVKLTCSALNGPVEMTLAPLESVTYIVWYSPATTGYKEESIIFQPEMGEEFWYLLKLTTELPKPKEIPEMQCDLGKKIIQTLPLYNPTHETLELRIRNSNPINFVIELNRKLPLVLLPHSTTELSVYFHPSGLGRHGHETCINFYCTQFKEWKFYLFGVGLYPRPIELKRVTTILGLQASVMVHFRNPTSEDVSVDLILTNKEQPKGLAIDQCWKTFLHENAAFRFSSLRRTHGIIVPPKGNLDIPVLFIPSTMTLYKTMVIVKMKRTNKKNWLIDNFDELSAETKRYMGVGYGEIQAIHWMYPIIGLPQAPPPKSSPVIIRCQANKQREEKVEVSMLGSFFNTHPKPDMTEFLVFPKRNVYKSIYEDVDVNSKRREFEYEIEFESEDVKSNLDSFVTLYLFRKHFNVKSEIISLIFNVIFTPRKPFRANVTLNVECITEGIWKFPITLIATEPEVEDVINIHGIGLFKTSETEFRLTSQTRYYEPFVAHFLPGSDQEFFVKPQSGELPPFYTKGIVIIVGFKPRMYSKKYQATLVIQTDEIYWLYEINGLAPSSKSLTHVTAKVDATSKIYDCMPPIQRNFIRENAKLRSTAVSSTVKGAPLFKKHK</sequence>
<gene>
    <name evidence="5" type="primary">Cfap47</name>
</gene>
<proteinExistence type="evidence at protein level"/>
<evidence type="ECO:0000255" key="1">
    <source>
        <dbReference type="PROSITE-ProRule" id="PRU00044"/>
    </source>
</evidence>
<evidence type="ECO:0000256" key="2">
    <source>
        <dbReference type="SAM" id="MobiDB-lite"/>
    </source>
</evidence>
<evidence type="ECO:0000269" key="3">
    <source>
    </source>
</evidence>
<evidence type="ECO:0000305" key="4"/>
<evidence type="ECO:0000312" key="5">
    <source>
        <dbReference type="MGI" id="MGI:3781475"/>
    </source>
</evidence>
<evidence type="ECO:0000312" key="6">
    <source>
        <dbReference type="Proteomes" id="UP000000589"/>
    </source>
</evidence>
<accession>A0A0G2JEB6</accession>
<feature type="chain" id="PRO_0000454186" description="Cilia and flagella-associated protein 47">
    <location>
        <begin position="1"/>
        <end position="3184"/>
    </location>
</feature>
<feature type="domain" description="Calponin-homology (CH)" evidence="1">
    <location>
        <begin position="1729"/>
        <end position="1851"/>
    </location>
</feature>
<feature type="region of interest" description="Disordered" evidence="2">
    <location>
        <begin position="2491"/>
        <end position="2514"/>
    </location>
</feature>
<feature type="compositionally biased region" description="Acidic residues" evidence="2">
    <location>
        <begin position="2493"/>
        <end position="2502"/>
    </location>
</feature>
<name>CFA47_MOUSE</name>
<comment type="function">
    <text evidence="3">Plays a role in flagellar formation and sperm motility.</text>
</comment>
<comment type="subunit">
    <text evidence="3">Interacts with CFAP65.</text>
</comment>
<comment type="subcellular location">
    <subcellularLocation>
        <location evidence="3">Cytoplasm</location>
        <location evidence="3">Cytoskeleton</location>
        <location evidence="3">Flagellum basal body</location>
    </subcellularLocation>
</comment>
<comment type="tissue specificity">
    <text evidence="3">Highly expressed in spermatzoa (at protein level).</text>
</comment>
<dbReference type="CCDS" id="CCDS90732.1"/>
<dbReference type="RefSeq" id="NP_001355647.2">
    <property type="nucleotide sequence ID" value="NM_001368718.2"/>
</dbReference>
<dbReference type="FunCoup" id="A0A0G2JEB6">
    <property type="interactions" value="46"/>
</dbReference>
<dbReference type="STRING" id="10090.ENSMUSP00000142707"/>
<dbReference type="GlyGen" id="A0A0G2JEB6">
    <property type="glycosylation" value="1 site"/>
</dbReference>
<dbReference type="iPTMnet" id="A0A0G2JEB6"/>
<dbReference type="PhosphoSitePlus" id="A0A0G2JEB6"/>
<dbReference type="ProteomicsDB" id="351396"/>
<dbReference type="Ensembl" id="ENSMUST00000197180.6">
    <property type="protein sequence ID" value="ENSMUSP00000142707.3"/>
    <property type="gene ID" value="ENSMUSG00000073077.8"/>
</dbReference>
<dbReference type="GeneID" id="636104"/>
<dbReference type="AGR" id="MGI:3781475"/>
<dbReference type="MGI" id="MGI:3781475">
    <property type="gene designation" value="Cfap47"/>
</dbReference>
<dbReference type="VEuPathDB" id="HostDB:ENSMUSG00000073077"/>
<dbReference type="GeneTree" id="ENSGT00940000159699"/>
<dbReference type="InParanoid" id="A0A0G2JEB6"/>
<dbReference type="OMA" id="PMTNEAK"/>
<dbReference type="OrthoDB" id="10060824at2759"/>
<dbReference type="ChiTaRS" id="Gm7173">
    <property type="organism name" value="mouse"/>
</dbReference>
<dbReference type="PRO" id="PR:A0A0G2JEB6"/>
<dbReference type="Proteomes" id="UP000000589">
    <property type="component" value="Chromosome X"/>
</dbReference>
<dbReference type="RNAct" id="A0A0G2JEB6">
    <property type="molecule type" value="protein"/>
</dbReference>
<dbReference type="Bgee" id="ENSMUSG00000073077">
    <property type="expression patterns" value="Expressed in animal zygote and 39 other cell types or tissues"/>
</dbReference>
<dbReference type="ExpressionAtlas" id="A0A0G2JEB6">
    <property type="expression patterns" value="baseline and differential"/>
</dbReference>
<dbReference type="GO" id="GO:0005737">
    <property type="term" value="C:cytoplasm"/>
    <property type="evidence" value="ECO:0007669"/>
    <property type="project" value="UniProtKB-KW"/>
</dbReference>
<dbReference type="GO" id="GO:0005856">
    <property type="term" value="C:cytoskeleton"/>
    <property type="evidence" value="ECO:0007669"/>
    <property type="project" value="UniProtKB-KW"/>
</dbReference>
<dbReference type="GO" id="GO:0031514">
    <property type="term" value="C:motile cilium"/>
    <property type="evidence" value="ECO:0007669"/>
    <property type="project" value="UniProtKB-KW"/>
</dbReference>
<dbReference type="GO" id="GO:0120212">
    <property type="term" value="C:sperm head-tail coupling apparatus"/>
    <property type="evidence" value="ECO:0000314"/>
    <property type="project" value="UniProtKB"/>
</dbReference>
<dbReference type="GO" id="GO:0007288">
    <property type="term" value="P:sperm axoneme assembly"/>
    <property type="evidence" value="ECO:0000315"/>
    <property type="project" value="UniProtKB"/>
</dbReference>
<dbReference type="Gene3D" id="1.10.418.10">
    <property type="entry name" value="Calponin-like domain"/>
    <property type="match status" value="1"/>
</dbReference>
<dbReference type="Gene3D" id="2.60.40.10">
    <property type="entry name" value="Immunoglobulins"/>
    <property type="match status" value="5"/>
</dbReference>
<dbReference type="InterPro" id="IPR056343">
    <property type="entry name" value="CFAP47_dom"/>
</dbReference>
<dbReference type="InterPro" id="IPR001715">
    <property type="entry name" value="CH_dom"/>
</dbReference>
<dbReference type="InterPro" id="IPR036872">
    <property type="entry name" value="CH_dom_sf"/>
</dbReference>
<dbReference type="InterPro" id="IPR053879">
    <property type="entry name" value="HYDIN_VesB_CFA65-like_Ig"/>
</dbReference>
<dbReference type="InterPro" id="IPR013783">
    <property type="entry name" value="Ig-like_fold"/>
</dbReference>
<dbReference type="PANTHER" id="PTHR45912">
    <property type="entry name" value="CILIA- AND FLAGELLA-ASSOCIATED PROTEIN 47"/>
    <property type="match status" value="1"/>
</dbReference>
<dbReference type="PANTHER" id="PTHR45912:SF3">
    <property type="entry name" value="CILIA- AND FLAGELLA-ASSOCIATED PROTEIN 47"/>
    <property type="match status" value="1"/>
</dbReference>
<dbReference type="Pfam" id="PF24529">
    <property type="entry name" value="CFAP47"/>
    <property type="match status" value="1"/>
</dbReference>
<dbReference type="Pfam" id="PF22544">
    <property type="entry name" value="HYDIN_VesB_CFA65-like_Ig"/>
    <property type="match status" value="2"/>
</dbReference>
<dbReference type="Pfam" id="PF24507">
    <property type="entry name" value="Ig_CFAP65_4th"/>
    <property type="match status" value="1"/>
</dbReference>
<dbReference type="SMART" id="SM00033">
    <property type="entry name" value="CH"/>
    <property type="match status" value="1"/>
</dbReference>
<dbReference type="SUPFAM" id="SSF47576">
    <property type="entry name" value="Calponin-homology domain, CH-domain"/>
    <property type="match status" value="1"/>
</dbReference>
<dbReference type="PROSITE" id="PS50021">
    <property type="entry name" value="CH"/>
    <property type="match status" value="1"/>
</dbReference>
<keyword id="KW-0966">Cell projection</keyword>
<keyword id="KW-0969">Cilium</keyword>
<keyword id="KW-0963">Cytoplasm</keyword>
<keyword id="KW-0206">Cytoskeleton</keyword>
<keyword id="KW-0282">Flagellum</keyword>
<keyword id="KW-1185">Reference proteome</keyword>
<protein>
    <recommendedName>
        <fullName evidence="4">Cilia and flagella-associated protein 47</fullName>
    </recommendedName>
</protein>
<reference evidence="6" key="1">
    <citation type="journal article" date="2009" name="PLoS Biol.">
        <title>Lineage-specific biology revealed by a finished genome assembly of the mouse.</title>
        <authorList>
            <person name="Church D.M."/>
            <person name="Goodstadt L."/>
            <person name="Hillier L.W."/>
            <person name="Zody M.C."/>
            <person name="Goldstein S."/>
            <person name="She X."/>
            <person name="Bult C.J."/>
            <person name="Agarwala R."/>
            <person name="Cherry J.L."/>
            <person name="DiCuccio M."/>
            <person name="Hlavina W."/>
            <person name="Kapustin Y."/>
            <person name="Meric P."/>
            <person name="Maglott D."/>
            <person name="Birtle Z."/>
            <person name="Marques A.C."/>
            <person name="Graves T."/>
            <person name="Zhou S."/>
            <person name="Teague B."/>
            <person name="Potamousis K."/>
            <person name="Churas C."/>
            <person name="Place M."/>
            <person name="Herschleb J."/>
            <person name="Runnheim R."/>
            <person name="Forrest D."/>
            <person name="Amos-Landgraf J."/>
            <person name="Schwartz D.C."/>
            <person name="Cheng Z."/>
            <person name="Lindblad-Toh K."/>
            <person name="Eichler E.E."/>
            <person name="Ponting C.P."/>
        </authorList>
    </citation>
    <scope>NUCLEOTIDE SEQUENCE [LARGE SCALE GENOMIC DNA]</scope>
    <source>
        <strain evidence="6">C57BL/6J</strain>
    </source>
</reference>
<reference key="2">
    <citation type="journal article" date="2021" name="Am. J. Hum. Genet.">
        <title>Deleterious variants in X-linked CFAP47 induce asthenoteratozoospermia and primary male infertility.</title>
        <authorList>
            <person name="Liu C."/>
            <person name="Tu C."/>
            <person name="Wang L."/>
            <person name="Wu H."/>
            <person name="Houston B.J."/>
            <person name="Mastrorosa F.K."/>
            <person name="Zhang W."/>
            <person name="Shen Y."/>
            <person name="Wang J."/>
            <person name="Tian S."/>
            <person name="Meng L."/>
            <person name="Cong J."/>
            <person name="Yang S."/>
            <person name="Jiang Y."/>
            <person name="Tang S."/>
            <person name="Zeng Y."/>
            <person name="Lv M."/>
            <person name="Lin G."/>
            <person name="Li J."/>
            <person name="Saiyin H."/>
            <person name="He X."/>
            <person name="Jin L."/>
            <person name="Toure A."/>
            <person name="Ray P.F."/>
            <person name="Veltman J.A."/>
            <person name="Shi Q."/>
            <person name="O'Bryan M.K."/>
            <person name="Cao Y."/>
            <person name="Tan Y.Q."/>
            <person name="Zhang F."/>
        </authorList>
    </citation>
    <scope>FUNCTION</scope>
    <scope>SUBCELLULAR LOCATION</scope>
    <scope>INTERACTION WITH CFAP65</scope>
    <scope>TISSUE SPECIFICITY</scope>
</reference>
<organism>
    <name type="scientific">Mus musculus</name>
    <name type="common">Mouse</name>
    <dbReference type="NCBI Taxonomy" id="10090"/>
    <lineage>
        <taxon>Eukaryota</taxon>
        <taxon>Metazoa</taxon>
        <taxon>Chordata</taxon>
        <taxon>Craniata</taxon>
        <taxon>Vertebrata</taxon>
        <taxon>Euteleostomi</taxon>
        <taxon>Mammalia</taxon>
        <taxon>Eutheria</taxon>
        <taxon>Euarchontoglires</taxon>
        <taxon>Glires</taxon>
        <taxon>Rodentia</taxon>
        <taxon>Myomorpha</taxon>
        <taxon>Muroidea</taxon>
        <taxon>Muridae</taxon>
        <taxon>Murinae</taxon>
        <taxon>Mus</taxon>
        <taxon>Mus</taxon>
    </lineage>
</organism>